<reference key="1">
    <citation type="journal article" date="2005" name="Nature">
        <title>Genomic sequence of the pathogenic and allergenic filamentous fungus Aspergillus fumigatus.</title>
        <authorList>
            <person name="Nierman W.C."/>
            <person name="Pain A."/>
            <person name="Anderson M.J."/>
            <person name="Wortman J.R."/>
            <person name="Kim H.S."/>
            <person name="Arroyo J."/>
            <person name="Berriman M."/>
            <person name="Abe K."/>
            <person name="Archer D.B."/>
            <person name="Bermejo C."/>
            <person name="Bennett J.W."/>
            <person name="Bowyer P."/>
            <person name="Chen D."/>
            <person name="Collins M."/>
            <person name="Coulsen R."/>
            <person name="Davies R."/>
            <person name="Dyer P.S."/>
            <person name="Farman M.L."/>
            <person name="Fedorova N."/>
            <person name="Fedorova N.D."/>
            <person name="Feldblyum T.V."/>
            <person name="Fischer R."/>
            <person name="Fosker N."/>
            <person name="Fraser A."/>
            <person name="Garcia J.L."/>
            <person name="Garcia M.J."/>
            <person name="Goble A."/>
            <person name="Goldman G.H."/>
            <person name="Gomi K."/>
            <person name="Griffith-Jones S."/>
            <person name="Gwilliam R."/>
            <person name="Haas B.J."/>
            <person name="Haas H."/>
            <person name="Harris D.E."/>
            <person name="Horiuchi H."/>
            <person name="Huang J."/>
            <person name="Humphray S."/>
            <person name="Jimenez J."/>
            <person name="Keller N."/>
            <person name="Khouri H."/>
            <person name="Kitamoto K."/>
            <person name="Kobayashi T."/>
            <person name="Konzack S."/>
            <person name="Kulkarni R."/>
            <person name="Kumagai T."/>
            <person name="Lafton A."/>
            <person name="Latge J.-P."/>
            <person name="Li W."/>
            <person name="Lord A."/>
            <person name="Lu C."/>
            <person name="Majoros W.H."/>
            <person name="May G.S."/>
            <person name="Miller B.L."/>
            <person name="Mohamoud Y."/>
            <person name="Molina M."/>
            <person name="Monod M."/>
            <person name="Mouyna I."/>
            <person name="Mulligan S."/>
            <person name="Murphy L.D."/>
            <person name="O'Neil S."/>
            <person name="Paulsen I."/>
            <person name="Penalva M.A."/>
            <person name="Pertea M."/>
            <person name="Price C."/>
            <person name="Pritchard B.L."/>
            <person name="Quail M.A."/>
            <person name="Rabbinowitsch E."/>
            <person name="Rawlins N."/>
            <person name="Rajandream M.A."/>
            <person name="Reichard U."/>
            <person name="Renauld H."/>
            <person name="Robson G.D."/>
            <person name="Rodriguez de Cordoba S."/>
            <person name="Rodriguez-Pena J.M."/>
            <person name="Ronning C.M."/>
            <person name="Rutter S."/>
            <person name="Salzberg S.L."/>
            <person name="Sanchez M."/>
            <person name="Sanchez-Ferrero J.C."/>
            <person name="Saunders D."/>
            <person name="Seeger K."/>
            <person name="Squares R."/>
            <person name="Squares S."/>
            <person name="Takeuchi M."/>
            <person name="Tekaia F."/>
            <person name="Turner G."/>
            <person name="Vazquez de Aldana C.R."/>
            <person name="Weidman J."/>
            <person name="White O."/>
            <person name="Woodward J.R."/>
            <person name="Yu J.-H."/>
            <person name="Fraser C.M."/>
            <person name="Galagan J.E."/>
            <person name="Asai K."/>
            <person name="Machida M."/>
            <person name="Hall N."/>
            <person name="Barrell B.G."/>
            <person name="Denning D.W."/>
        </authorList>
    </citation>
    <scope>NUCLEOTIDE SEQUENCE [LARGE SCALE GENOMIC DNA]</scope>
    <source>
        <strain>ATCC MYA-4609 / CBS 101355 / FGSC A1100 / Af293</strain>
    </source>
</reference>
<sequence>MSALSSENINGVYIPSALLLFGTFIVKKEFVPYAVAVTAILAGLKLFTGGNKPRKVLNPTEFQEFVLKEKIDVSHNVCIYRFALPRPTDILGLPIGQHISLAATIEGQPKEVVRSYTPISSDNEAGYFDLLVKAYPQGNISKYLTTLKIGDTMKVRGPKGAMVYTPNMCRHIGMIAGGTGITPMLQIIKAVIRNRPRNGGNDTTKLDLIFANVNPDDILLKEELDMLAAEDPDFNIYYVLNNPPQGWTGGVGFVTPEMIKEHLPAPASDVKILLCGPPPMISAMKKATESLGYTKARPVSKLEDQVFCF</sequence>
<proteinExistence type="inferred from homology"/>
<accession>Q4X0B5</accession>
<organism>
    <name type="scientific">Aspergillus fumigatus (strain ATCC MYA-4609 / CBS 101355 / FGSC A1100 / Af293)</name>
    <name type="common">Neosartorya fumigata</name>
    <dbReference type="NCBI Taxonomy" id="330879"/>
    <lineage>
        <taxon>Eukaryota</taxon>
        <taxon>Fungi</taxon>
        <taxon>Dikarya</taxon>
        <taxon>Ascomycota</taxon>
        <taxon>Pezizomycotina</taxon>
        <taxon>Eurotiomycetes</taxon>
        <taxon>Eurotiomycetidae</taxon>
        <taxon>Eurotiales</taxon>
        <taxon>Aspergillaceae</taxon>
        <taxon>Aspergillus</taxon>
        <taxon>Aspergillus subgen. Fumigati</taxon>
    </lineage>
</organism>
<keyword id="KW-0274">FAD</keyword>
<keyword id="KW-0285">Flavoprotein</keyword>
<keyword id="KW-0472">Membrane</keyword>
<keyword id="KW-0496">Mitochondrion</keyword>
<keyword id="KW-1000">Mitochondrion outer membrane</keyword>
<keyword id="KW-0520">NAD</keyword>
<keyword id="KW-0560">Oxidoreductase</keyword>
<keyword id="KW-1185">Reference proteome</keyword>
<keyword id="KW-0808">Transferase</keyword>
<keyword id="KW-0812">Transmembrane</keyword>
<keyword id="KW-1133">Transmembrane helix</keyword>
<feature type="chain" id="PRO_0000330145" description="NADH-cytochrome b5 reductase 1">
    <location>
        <begin position="1"/>
        <end position="309"/>
    </location>
</feature>
<feature type="transmembrane region" description="Helical" evidence="3">
    <location>
        <begin position="30"/>
        <end position="50"/>
    </location>
</feature>
<feature type="domain" description="FAD-binding FR-type" evidence="4">
    <location>
        <begin position="60"/>
        <end position="165"/>
    </location>
</feature>
<feature type="binding site" evidence="1">
    <location>
        <begin position="145"/>
        <end position="160"/>
    </location>
    <ligand>
        <name>FAD</name>
        <dbReference type="ChEBI" id="CHEBI:57692"/>
    </ligand>
</feature>
<feature type="binding site" evidence="1">
    <location>
        <begin position="171"/>
        <end position="208"/>
    </location>
    <ligand>
        <name>FAD</name>
        <dbReference type="ChEBI" id="CHEBI:57692"/>
    </ligand>
</feature>
<dbReference type="EC" id="1.6.2.2" evidence="2"/>
<dbReference type="EMBL" id="AAHF01000001">
    <property type="protein sequence ID" value="EAL93700.2"/>
    <property type="molecule type" value="Genomic_DNA"/>
</dbReference>
<dbReference type="RefSeq" id="XP_755738.2">
    <property type="nucleotide sequence ID" value="XM_750645.2"/>
</dbReference>
<dbReference type="SMR" id="Q4X0B5"/>
<dbReference type="FunCoup" id="Q4X0B5">
    <property type="interactions" value="256"/>
</dbReference>
<dbReference type="STRING" id="330879.Q4X0B5"/>
<dbReference type="EnsemblFungi" id="EAL93700">
    <property type="protein sequence ID" value="EAL93700"/>
    <property type="gene ID" value="AFUA_2G14060"/>
</dbReference>
<dbReference type="GeneID" id="3513143"/>
<dbReference type="KEGG" id="afm:AFUA_2G14060"/>
<dbReference type="VEuPathDB" id="FungiDB:Afu2g14060"/>
<dbReference type="HOGENOM" id="CLU_003827_9_0_1"/>
<dbReference type="InParanoid" id="Q4X0B5"/>
<dbReference type="OMA" id="VQIFMCG"/>
<dbReference type="OrthoDB" id="432685at2759"/>
<dbReference type="UniPathway" id="UPA00559"/>
<dbReference type="Proteomes" id="UP000002530">
    <property type="component" value="Chromosome 2"/>
</dbReference>
<dbReference type="GO" id="GO:0005741">
    <property type="term" value="C:mitochondrial outer membrane"/>
    <property type="evidence" value="ECO:0007669"/>
    <property type="project" value="UniProtKB-SubCell"/>
</dbReference>
<dbReference type="GO" id="GO:0004128">
    <property type="term" value="F:cytochrome-b5 reductase activity, acting on NAD(P)H"/>
    <property type="evidence" value="ECO:0000250"/>
    <property type="project" value="UniProtKB"/>
</dbReference>
<dbReference type="GO" id="GO:0003954">
    <property type="term" value="F:NADH dehydrogenase activity"/>
    <property type="evidence" value="ECO:0000250"/>
    <property type="project" value="UniProtKB"/>
</dbReference>
<dbReference type="GO" id="GO:0016740">
    <property type="term" value="F:transferase activity"/>
    <property type="evidence" value="ECO:0007669"/>
    <property type="project" value="UniProtKB-KW"/>
</dbReference>
<dbReference type="GO" id="GO:0017183">
    <property type="term" value="P:protein histidyl modification to diphthamide"/>
    <property type="evidence" value="ECO:0000250"/>
    <property type="project" value="UniProtKB"/>
</dbReference>
<dbReference type="GO" id="GO:0002926">
    <property type="term" value="P:tRNA wobble base 5-methoxycarbonylmethyl-2-thiouridinylation"/>
    <property type="evidence" value="ECO:0000250"/>
    <property type="project" value="UniProtKB"/>
</dbReference>
<dbReference type="CDD" id="cd06183">
    <property type="entry name" value="cyt_b5_reduct_like"/>
    <property type="match status" value="1"/>
</dbReference>
<dbReference type="FunFam" id="2.40.30.10:FF:000032">
    <property type="entry name" value="NADH-cytochrome b5 reductase"/>
    <property type="match status" value="1"/>
</dbReference>
<dbReference type="FunFam" id="3.40.50.80:FF:000019">
    <property type="entry name" value="NADH-cytochrome b5 reductase"/>
    <property type="match status" value="1"/>
</dbReference>
<dbReference type="Gene3D" id="3.40.50.80">
    <property type="entry name" value="Nucleotide-binding domain of ferredoxin-NADP reductase (FNR) module"/>
    <property type="match status" value="1"/>
</dbReference>
<dbReference type="Gene3D" id="2.40.30.10">
    <property type="entry name" value="Translation factors"/>
    <property type="match status" value="1"/>
</dbReference>
<dbReference type="InterPro" id="IPR001834">
    <property type="entry name" value="CBR-like"/>
</dbReference>
<dbReference type="InterPro" id="IPR008333">
    <property type="entry name" value="Cbr1-like_FAD-bd_dom"/>
</dbReference>
<dbReference type="InterPro" id="IPR017927">
    <property type="entry name" value="FAD-bd_FR_type"/>
</dbReference>
<dbReference type="InterPro" id="IPR001709">
    <property type="entry name" value="Flavoprot_Pyr_Nucl_cyt_Rdtase"/>
</dbReference>
<dbReference type="InterPro" id="IPR039261">
    <property type="entry name" value="FNR_nucleotide-bd"/>
</dbReference>
<dbReference type="InterPro" id="IPR001433">
    <property type="entry name" value="OxRdtase_FAD/NAD-bd"/>
</dbReference>
<dbReference type="InterPro" id="IPR017938">
    <property type="entry name" value="Riboflavin_synthase-like_b-brl"/>
</dbReference>
<dbReference type="PANTHER" id="PTHR19370">
    <property type="entry name" value="NADH-CYTOCHROME B5 REDUCTASE"/>
    <property type="match status" value="1"/>
</dbReference>
<dbReference type="PANTHER" id="PTHR19370:SF184">
    <property type="entry name" value="NADH-CYTOCHROME B5 REDUCTASE-LIKE"/>
    <property type="match status" value="1"/>
</dbReference>
<dbReference type="Pfam" id="PF00970">
    <property type="entry name" value="FAD_binding_6"/>
    <property type="match status" value="1"/>
</dbReference>
<dbReference type="Pfam" id="PF00175">
    <property type="entry name" value="NAD_binding_1"/>
    <property type="match status" value="1"/>
</dbReference>
<dbReference type="PRINTS" id="PR00406">
    <property type="entry name" value="CYTB5RDTASE"/>
</dbReference>
<dbReference type="PRINTS" id="PR00371">
    <property type="entry name" value="FPNCR"/>
</dbReference>
<dbReference type="SUPFAM" id="SSF52343">
    <property type="entry name" value="Ferredoxin reductase-like, C-terminal NADP-linked domain"/>
    <property type="match status" value="1"/>
</dbReference>
<dbReference type="SUPFAM" id="SSF63380">
    <property type="entry name" value="Riboflavin synthase domain-like"/>
    <property type="match status" value="1"/>
</dbReference>
<dbReference type="PROSITE" id="PS51384">
    <property type="entry name" value="FAD_FR"/>
    <property type="match status" value="1"/>
</dbReference>
<comment type="function">
    <text evidence="2">NADH-dependent reductase for dph3 and cytochrome b5. Required for the first step of diphthamide biosynthesis, a post-translational modification of histidine which occurs in elongation factor 2. Dph1 and dph2 transfer a 3-amino-3-carboxypropyl (ACP) group from S-adenosyl-L-methionine (SAM) to a histidine residue, the reaction is assisted by a reduction system comprising dph3 and a NADH-dependent reductase, predominantly cbr1. By reducing dph3, also involved in the formation of the tRNA wobble base modification mcm5s 2U (5-methoxycarbonylmethyl-2-thiouridine), mediated by the elongator complex. The cytochrome b5/NADH cytochrome b5 reductase electron transfer system supports the catalytic activity of several sterol biosynthetic enzymes.</text>
</comment>
<comment type="catalytic activity">
    <reaction evidence="2">
        <text>2 Fe(III)-[cytochrome b5] + NADH = 2 Fe(II)-[cytochrome b5] + NAD(+) + H(+)</text>
        <dbReference type="Rhea" id="RHEA:46680"/>
        <dbReference type="Rhea" id="RHEA-COMP:10438"/>
        <dbReference type="Rhea" id="RHEA-COMP:10439"/>
        <dbReference type="ChEBI" id="CHEBI:15378"/>
        <dbReference type="ChEBI" id="CHEBI:29033"/>
        <dbReference type="ChEBI" id="CHEBI:29034"/>
        <dbReference type="ChEBI" id="CHEBI:57540"/>
        <dbReference type="ChEBI" id="CHEBI:57945"/>
        <dbReference type="EC" id="1.6.2.2"/>
    </reaction>
</comment>
<comment type="catalytic activity">
    <reaction evidence="2">
        <text>2 Fe(3+)-[Dph3] + NADH = 2 Fe(2+)-[Dph3] + NAD(+) + H(+)</text>
        <dbReference type="Rhea" id="RHEA:71231"/>
        <dbReference type="Rhea" id="RHEA-COMP:18002"/>
        <dbReference type="Rhea" id="RHEA-COMP:18003"/>
        <dbReference type="ChEBI" id="CHEBI:15378"/>
        <dbReference type="ChEBI" id="CHEBI:29033"/>
        <dbReference type="ChEBI" id="CHEBI:29034"/>
        <dbReference type="ChEBI" id="CHEBI:57540"/>
        <dbReference type="ChEBI" id="CHEBI:57945"/>
        <dbReference type="ChEBI" id="CHEBI:83228"/>
    </reaction>
    <physiologicalReaction direction="left-to-right" evidence="2">
        <dbReference type="Rhea" id="RHEA:71232"/>
    </physiologicalReaction>
</comment>
<comment type="cofactor">
    <cofactor evidence="3">
        <name>FAD</name>
        <dbReference type="ChEBI" id="CHEBI:57692"/>
    </cofactor>
</comment>
<comment type="pathway">
    <text evidence="2">Protein modification; peptidyl-diphthamide biosynthesis.</text>
</comment>
<comment type="subunit">
    <text evidence="2">Monomer. Component of the 2-(3-amino-3-carboxypropyl)histidine synthase complex composed of dph1, dph2, dph3 and a NADH-dependent reductase, predominantly cbr1.</text>
</comment>
<comment type="subcellular location">
    <subcellularLocation>
        <location evidence="2">Mitochondrion outer membrane</location>
        <topology evidence="3">Single-pass membrane protein</topology>
    </subcellularLocation>
</comment>
<comment type="similarity">
    <text evidence="5">Belongs to the flavoprotein pyridine nucleotide cytochrome reductase family.</text>
</comment>
<protein>
    <recommendedName>
        <fullName>NADH-cytochrome b5 reductase 1</fullName>
        <ecNumber evidence="2">1.6.2.2</ecNumber>
    </recommendedName>
    <alternativeName>
        <fullName>Microsomal cytochrome b reductase</fullName>
    </alternativeName>
</protein>
<name>NCB5R_ASPFU</name>
<evidence type="ECO:0000250" key="1"/>
<evidence type="ECO:0000250" key="2">
    <source>
        <dbReference type="UniProtKB" id="P38626"/>
    </source>
</evidence>
<evidence type="ECO:0000255" key="3"/>
<evidence type="ECO:0000255" key="4">
    <source>
        <dbReference type="PROSITE-ProRule" id="PRU00716"/>
    </source>
</evidence>
<evidence type="ECO:0000305" key="5"/>
<gene>
    <name type="primary">cbr1</name>
    <name type="ORF">AFUA_2G14060</name>
</gene>